<accession>P13001</accession>
<accession>Q2M777</accession>
<sequence>MNNIWWQTKGQGNVHLVLLHGWGLNAEVWRCIDEELSSHFTLHLVDLPGFGRSRGFGALSLADMAEAVLQQAPDKAIWLGWSLGGLVASQIALTHPERVQALVTVASSPCFSARDEWPGIKPDVLAGFQQQLSDDFQRTVERFLALQTMGTETARQDARALKKTVLALPMPEVDVLNGGLEILKTVDLRQPLQNVSMPFLRLYGYLDGLVPRKVVPMLDKLWPHSESYIFAKAAHAPFISHPAEFCHLLVALKQRV</sequence>
<reference key="1">
    <citation type="journal article" date="1989" name="Nucleic Acids Res.">
        <title>Nucleotide sequence of the bioH gene of Escherichia coli.</title>
        <authorList>
            <person name="O'Regan M."/>
            <person name="Gloeckler R."/>
            <person name="Bernard S."/>
            <person name="Ledoux C."/>
            <person name="Ohsawa I."/>
            <person name="Lemoine Y."/>
        </authorList>
    </citation>
    <scope>NUCLEOTIDE SEQUENCE [GENOMIC DNA]</scope>
    <source>
        <strain>K12</strain>
    </source>
</reference>
<reference key="2">
    <citation type="journal article" date="1997" name="Science">
        <title>The complete genome sequence of Escherichia coli K-12.</title>
        <authorList>
            <person name="Blattner F.R."/>
            <person name="Plunkett G. III"/>
            <person name="Bloch C.A."/>
            <person name="Perna N.T."/>
            <person name="Burland V."/>
            <person name="Riley M."/>
            <person name="Collado-Vides J."/>
            <person name="Glasner J.D."/>
            <person name="Rode C.K."/>
            <person name="Mayhew G.F."/>
            <person name="Gregor J."/>
            <person name="Davis N.W."/>
            <person name="Kirkpatrick H.A."/>
            <person name="Goeden M.A."/>
            <person name="Rose D.J."/>
            <person name="Mau B."/>
            <person name="Shao Y."/>
        </authorList>
    </citation>
    <scope>NUCLEOTIDE SEQUENCE [LARGE SCALE GENOMIC DNA]</scope>
    <source>
        <strain>K12 / MG1655 / ATCC 47076</strain>
    </source>
</reference>
<reference key="3">
    <citation type="journal article" date="2006" name="Mol. Syst. Biol.">
        <title>Highly accurate genome sequences of Escherichia coli K-12 strains MG1655 and W3110.</title>
        <authorList>
            <person name="Hayashi K."/>
            <person name="Morooka N."/>
            <person name="Yamamoto Y."/>
            <person name="Fujita K."/>
            <person name="Isono K."/>
            <person name="Choi S."/>
            <person name="Ohtsubo E."/>
            <person name="Baba T."/>
            <person name="Wanner B.L."/>
            <person name="Mori H."/>
            <person name="Horiuchi T."/>
        </authorList>
    </citation>
    <scope>NUCLEOTIDE SEQUENCE [LARGE SCALE GENOMIC DNA]</scope>
    <source>
        <strain>K12 / W3110 / ATCC 27325 / DSM 5911</strain>
    </source>
</reference>
<reference key="4">
    <citation type="journal article" date="2002" name="FEBS Lett.">
        <title>Purification and characterisation of the BIOH protein from the biotin biosynthetic pathway.</title>
        <authorList>
            <person name="Tomczyk N.H."/>
            <person name="Nettleship J.E."/>
            <person name="Baxter R.L."/>
            <person name="Crichton H.J."/>
            <person name="Webster S.P."/>
            <person name="Campopiano D.J."/>
        </authorList>
    </citation>
    <scope>FUNCTION IN THE BIOTIN BIOSYNTHESIS</scope>
    <scope>CATALYTIC ACTIVITY</scope>
    <scope>BINDING TO COA</scope>
    <scope>SUBUNIT</scope>
    <scope>MASS SPECTROMETRY</scope>
    <scope>MUTAGENESIS OF SER-82</scope>
    <source>
        <strain>K12 / JM101 / ATCC 33876 / DSM 3948 / NCIMB 11926</strain>
    </source>
</reference>
<reference key="5">
    <citation type="journal article" date="2007" name="Metab. Eng.">
        <title>Improving simvastatin bioconversion in Escherichia coli by deletion of bioH.</title>
        <authorList>
            <person name="Xie X."/>
            <person name="Wong W.W."/>
            <person name="Tang Y."/>
        </authorList>
    </citation>
    <scope>FUNCTION AS A CARBOXYLESTERASE AND IN THE SIMVASTATIN BIOCONVERSION</scope>
    <scope>DISRUPTION PHENOTYPE</scope>
    <scope>BIOPHYSICOCHEMICAL PROPERTIES</scope>
</reference>
<reference key="6">
    <citation type="journal article" date="2009" name="J. Microbiol. Biotechnol.">
        <title>Gene cloning, expression, and characterization of a new carboxylesterase from Serratia sp. SES-01: comparison with Escherichia coli BioHe enzyme.</title>
        <authorList>
            <person name="Kwon M.A."/>
            <person name="Kim H.S."/>
            <person name="Oh J.Y."/>
            <person name="Song B.K."/>
            <person name="Song J.K."/>
        </authorList>
    </citation>
    <scope>SUBSTRATE SPECIFICITY</scope>
    <scope>BIOPHYSICOCHEMICAL PROPERTIES</scope>
</reference>
<reference key="7">
    <citation type="journal article" date="2010" name="Nat. Chem. Biol.">
        <title>Biotin synthesis begins by hijacking the fatty acid synthetic pathway.</title>
        <authorList>
            <person name="Lin S."/>
            <person name="Hanson R.E."/>
            <person name="Cronan J.E."/>
        </authorList>
    </citation>
    <scope>FUNCTION AS A CARBOXYLESTERASE</scope>
    <scope>MUTAGENESIS OF SER-82</scope>
    <scope>SUBSTRATE SPECIFICITY</scope>
</reference>
<reference key="8">
    <citation type="journal article" date="2003" name="J. Biol. Chem.">
        <title>Integrating structure, bioinformatics, and enzymology to discover function: BioH, a new carboxylesterase from Escherichia coli.</title>
        <authorList>
            <person name="Sanishvili R."/>
            <person name="Yakunin A.F."/>
            <person name="Laskowski R.A."/>
            <person name="Skarina T."/>
            <person name="Evdokimova E."/>
            <person name="Doherty-Kirby A."/>
            <person name="Lajoie G.A."/>
            <person name="Thornton J.M."/>
            <person name="Arrowsmith C.H."/>
            <person name="Savchenko A."/>
            <person name="Joachimiak A."/>
            <person name="Edwards A.M."/>
        </authorList>
    </citation>
    <scope>X-RAY CRYSTALLOGRAPHY (1.7 ANGSTROMS)</scope>
    <scope>FUNCTION AS A CARBOXYLESTERASE</scope>
    <scope>SUBSTRATE SPECIFICITY</scope>
    <scope>BIOPHYSICOCHEMICAL PROPERTIES</scope>
    <source>
        <strain>K12 / DH5-alpha</strain>
    </source>
</reference>
<dbReference type="EC" id="3.1.1.85"/>
<dbReference type="EMBL" id="X15587">
    <property type="protein sequence ID" value="CAA33612.1"/>
    <property type="molecule type" value="Genomic_DNA"/>
</dbReference>
<dbReference type="EMBL" id="U18997">
    <property type="protein sequence ID" value="AAA58210.1"/>
    <property type="molecule type" value="Genomic_DNA"/>
</dbReference>
<dbReference type="EMBL" id="U00096">
    <property type="protein sequence ID" value="AAC76437.1"/>
    <property type="molecule type" value="Genomic_DNA"/>
</dbReference>
<dbReference type="EMBL" id="AP009048">
    <property type="protein sequence ID" value="BAE77879.1"/>
    <property type="molecule type" value="Genomic_DNA"/>
</dbReference>
<dbReference type="PIR" id="JQ0081">
    <property type="entry name" value="BVECBH"/>
</dbReference>
<dbReference type="RefSeq" id="NP_417871.1">
    <property type="nucleotide sequence ID" value="NC_000913.3"/>
</dbReference>
<dbReference type="RefSeq" id="WP_001060070.1">
    <property type="nucleotide sequence ID" value="NZ_SSZK01000008.1"/>
</dbReference>
<dbReference type="PDB" id="1M33">
    <property type="method" value="X-ray"/>
    <property type="resolution" value="1.70 A"/>
    <property type="chains" value="A=1-256"/>
</dbReference>
<dbReference type="PDBsum" id="1M33"/>
<dbReference type="SMR" id="P13001"/>
<dbReference type="BioGRID" id="4263494">
    <property type="interactions" value="18"/>
</dbReference>
<dbReference type="DIP" id="DIP-9223N"/>
<dbReference type="FunCoup" id="P13001">
    <property type="interactions" value="245"/>
</dbReference>
<dbReference type="IntAct" id="P13001">
    <property type="interactions" value="5"/>
</dbReference>
<dbReference type="STRING" id="511145.b3412"/>
<dbReference type="DrugBank" id="DB03688">
    <property type="generic name" value="Hydracrylic acid"/>
</dbReference>
<dbReference type="ESTHER" id="ecoli-bioh">
    <property type="family name" value="BioH"/>
</dbReference>
<dbReference type="MEROPS" id="S33.994"/>
<dbReference type="jPOST" id="P13001"/>
<dbReference type="PaxDb" id="511145-b3412"/>
<dbReference type="EnsemblBacteria" id="AAC76437">
    <property type="protein sequence ID" value="AAC76437"/>
    <property type="gene ID" value="b3412"/>
</dbReference>
<dbReference type="GeneID" id="947916"/>
<dbReference type="KEGG" id="ecj:JW3375"/>
<dbReference type="KEGG" id="eco:b3412"/>
<dbReference type="KEGG" id="ecoc:C3026_18510"/>
<dbReference type="PATRIC" id="fig|1411691.4.peg.3317"/>
<dbReference type="EchoBASE" id="EB0120"/>
<dbReference type="eggNOG" id="COG0596">
    <property type="taxonomic scope" value="Bacteria"/>
</dbReference>
<dbReference type="HOGENOM" id="CLU_020336_12_2_6"/>
<dbReference type="InParanoid" id="P13001"/>
<dbReference type="OMA" id="PFISHPQ"/>
<dbReference type="OrthoDB" id="9780744at2"/>
<dbReference type="PhylomeDB" id="P13001"/>
<dbReference type="BioCyc" id="EcoCyc:EG10122-MONOMER"/>
<dbReference type="BioCyc" id="MetaCyc:EG10122-MONOMER"/>
<dbReference type="BRENDA" id="3.1.1.1">
    <property type="organism ID" value="2026"/>
</dbReference>
<dbReference type="BRENDA" id="3.1.1.85">
    <property type="organism ID" value="2026"/>
</dbReference>
<dbReference type="SABIO-RK" id="P13001"/>
<dbReference type="UniPathway" id="UPA00078"/>
<dbReference type="EvolutionaryTrace" id="P13001"/>
<dbReference type="PRO" id="PR:P13001"/>
<dbReference type="Proteomes" id="UP000000625">
    <property type="component" value="Chromosome"/>
</dbReference>
<dbReference type="GO" id="GO:0005737">
    <property type="term" value="C:cytoplasm"/>
    <property type="evidence" value="ECO:0007669"/>
    <property type="project" value="UniProtKB-SubCell"/>
</dbReference>
<dbReference type="GO" id="GO:0106435">
    <property type="term" value="F:carboxylesterase activity"/>
    <property type="evidence" value="ECO:0000314"/>
    <property type="project" value="EcoCyc"/>
</dbReference>
<dbReference type="GO" id="GO:0052689">
    <property type="term" value="F:carboxylic ester hydrolase activity"/>
    <property type="evidence" value="ECO:0000314"/>
    <property type="project" value="UniProtKB"/>
</dbReference>
<dbReference type="GO" id="GO:0090499">
    <property type="term" value="F:pimelyl-[acyl-carrier protein] methyl ester esterase activity"/>
    <property type="evidence" value="ECO:0000314"/>
    <property type="project" value="EcoCyc"/>
</dbReference>
<dbReference type="GO" id="GO:0009102">
    <property type="term" value="P:biotin biosynthetic process"/>
    <property type="evidence" value="ECO:0000314"/>
    <property type="project" value="UniProtKB"/>
</dbReference>
<dbReference type="FunFam" id="3.40.50.1820:FF:000045">
    <property type="entry name" value="Pimeloyl-[acyl-carrier protein] methyl ester esterase"/>
    <property type="match status" value="1"/>
</dbReference>
<dbReference type="Gene3D" id="3.40.50.1820">
    <property type="entry name" value="alpha/beta hydrolase"/>
    <property type="match status" value="1"/>
</dbReference>
<dbReference type="HAMAP" id="MF_01260">
    <property type="entry name" value="Carboxylester"/>
    <property type="match status" value="1"/>
</dbReference>
<dbReference type="InterPro" id="IPR000073">
    <property type="entry name" value="AB_hydrolase_1"/>
</dbReference>
<dbReference type="InterPro" id="IPR029058">
    <property type="entry name" value="AB_hydrolase_fold"/>
</dbReference>
<dbReference type="InterPro" id="IPR010076">
    <property type="entry name" value="BioH"/>
</dbReference>
<dbReference type="InterPro" id="IPR050228">
    <property type="entry name" value="Carboxylesterase_BioH"/>
</dbReference>
<dbReference type="NCBIfam" id="TIGR01738">
    <property type="entry name" value="bioH"/>
    <property type="match status" value="1"/>
</dbReference>
<dbReference type="NCBIfam" id="NF007674">
    <property type="entry name" value="PRK10349.1"/>
    <property type="match status" value="1"/>
</dbReference>
<dbReference type="PANTHER" id="PTHR43194">
    <property type="entry name" value="HYDROLASE ALPHA/BETA FOLD FAMILY"/>
    <property type="match status" value="1"/>
</dbReference>
<dbReference type="PANTHER" id="PTHR43194:SF5">
    <property type="entry name" value="PIMELOYL-[ACYL-CARRIER PROTEIN] METHYL ESTER ESTERASE"/>
    <property type="match status" value="1"/>
</dbReference>
<dbReference type="Pfam" id="PF00561">
    <property type="entry name" value="Abhydrolase_1"/>
    <property type="match status" value="1"/>
</dbReference>
<dbReference type="SUPFAM" id="SSF53474">
    <property type="entry name" value="alpha/beta-Hydrolases"/>
    <property type="match status" value="1"/>
</dbReference>
<gene>
    <name type="primary">bioH</name>
    <name type="synonym">bioB</name>
    <name type="ordered locus">b3412</name>
    <name type="ordered locus">JW3375</name>
</gene>
<name>BIOH_ECOLI</name>
<feature type="chain" id="PRO_0000204473" description="Pimeloyl-[acyl-carrier protein] methyl ester esterase">
    <location>
        <begin position="1"/>
        <end position="256"/>
    </location>
</feature>
<feature type="domain" description="AB hydrolase-1" evidence="2">
    <location>
        <begin position="15"/>
        <end position="242"/>
    </location>
</feature>
<feature type="active site" description="Nucleophile">
    <location>
        <position position="82"/>
    </location>
</feature>
<feature type="active site" evidence="1">
    <location>
        <position position="207"/>
    </location>
</feature>
<feature type="active site">
    <location>
        <position position="235"/>
    </location>
</feature>
<feature type="binding site">
    <location>
        <position position="22"/>
    </location>
    <ligand>
        <name>substrate</name>
    </ligand>
</feature>
<feature type="binding site">
    <location>
        <begin position="82"/>
        <end position="83"/>
    </location>
    <ligand>
        <name>substrate</name>
    </ligand>
</feature>
<feature type="binding site">
    <location>
        <begin position="143"/>
        <end position="147"/>
    </location>
    <ligand>
        <name>substrate</name>
    </ligand>
</feature>
<feature type="binding site">
    <location>
        <position position="235"/>
    </location>
    <ligand>
        <name>substrate</name>
    </ligand>
</feature>
<feature type="mutagenesis site" description="No effect on CoA-binding. Loss of Carboxylesterase activity." evidence="3 7">
    <original>S</original>
    <variation>A</variation>
    <location>
        <position position="82"/>
    </location>
</feature>
<feature type="strand" evidence="9">
    <location>
        <begin position="6"/>
        <end position="9"/>
    </location>
</feature>
<feature type="strand" evidence="9">
    <location>
        <begin position="13"/>
        <end position="19"/>
    </location>
</feature>
<feature type="helix" evidence="9">
    <location>
        <begin position="26"/>
        <end position="31"/>
    </location>
</feature>
<feature type="helix" evidence="9">
    <location>
        <begin position="33"/>
        <end position="37"/>
    </location>
</feature>
<feature type="strand" evidence="9">
    <location>
        <begin position="40"/>
        <end position="45"/>
    </location>
</feature>
<feature type="helix" evidence="9">
    <location>
        <begin position="61"/>
        <end position="69"/>
    </location>
</feature>
<feature type="strand" evidence="9">
    <location>
        <begin position="74"/>
        <end position="81"/>
    </location>
</feature>
<feature type="helix" evidence="9">
    <location>
        <begin position="83"/>
        <end position="94"/>
    </location>
</feature>
<feature type="helix" evidence="9">
    <location>
        <begin position="96"/>
        <end position="98"/>
    </location>
</feature>
<feature type="strand" evidence="9">
    <location>
        <begin position="99"/>
        <end position="106"/>
    </location>
</feature>
<feature type="helix" evidence="9">
    <location>
        <begin position="122"/>
        <end position="145"/>
    </location>
</feature>
<feature type="helix" evidence="9">
    <location>
        <begin position="154"/>
        <end position="166"/>
    </location>
</feature>
<feature type="helix" evidence="9">
    <location>
        <begin position="173"/>
        <end position="185"/>
    </location>
</feature>
<feature type="helix" evidence="9">
    <location>
        <begin position="191"/>
        <end position="194"/>
    </location>
</feature>
<feature type="strand" evidence="9">
    <location>
        <begin position="199"/>
        <end position="204"/>
    </location>
</feature>
<feature type="strand" evidence="9">
    <location>
        <begin position="208"/>
        <end position="210"/>
    </location>
</feature>
<feature type="helix" evidence="9">
    <location>
        <begin position="214"/>
        <end position="221"/>
    </location>
</feature>
<feature type="strand" evidence="9">
    <location>
        <begin position="226"/>
        <end position="230"/>
    </location>
</feature>
<feature type="helix" evidence="9">
    <location>
        <begin position="237"/>
        <end position="240"/>
    </location>
</feature>
<feature type="helix" evidence="9">
    <location>
        <begin position="242"/>
        <end position="253"/>
    </location>
</feature>
<proteinExistence type="evidence at protein level"/>
<protein>
    <recommendedName>
        <fullName>Pimeloyl-[acyl-carrier protein] methyl ester esterase</fullName>
        <ecNumber>3.1.1.85</ecNumber>
    </recommendedName>
    <alternativeName>
        <fullName>Biotin synthesis protein BioH</fullName>
    </alternativeName>
    <alternativeName>
        <fullName>Carboxylesterase BioH</fullName>
    </alternativeName>
</protein>
<comment type="function">
    <text>The physiological role of BioH is to remove the methyl group introduced by BioC when the pimeloyl moiety is complete. It allows to synthesize pimeloyl-ACP via the fatty acid synthetic pathway through the hydrolysis of the ester bonds of pimeloyl-ACP esters. E.coli employs a methylation and demethylation strategy to allow elongation of a temporarily disguised malonate moiety to a pimelate moiety by the fatty acid synthetic enzymes. BioH shows a preference for short chain fatty acid esters (acyl chain length of up to 6 carbons) and short chain p-nitrophenyl esters. Also displays a weak thioesterase activity. Can form a complex with CoA, and may be involved in the condensation of CoA and pimelic acid into pimeloyl-CoA, a precursor in biotin biosynthesis.</text>
</comment>
<comment type="function">
    <text>Catalyzes the hydrolysis of the methyl ester bond of dimethylbutyryl-S-methyl mercaptopropionate (DMB-S-MMP) to yield dimethylbutyryl mercaptopropionic acid (DMBS-MPA) during the biocatalytic conversion of simvastin acid from monacolin J acid. Can also use acyl carriers such as dimethylbutyryl-S-ethyl mercaptopropionate (DMB-S-EMP) and dimethylbutyryl-S-methyl thioglycolate (DMB-S-MTG) as the thioester substrates.</text>
</comment>
<comment type="catalytic activity">
    <reaction evidence="3">
        <text>6-carboxyhexanoyl-[ACP] methyl ester + H2O = 6-carboxyhexanoyl-[ACP] + methanol + H(+)</text>
        <dbReference type="Rhea" id="RHEA:42700"/>
        <dbReference type="Rhea" id="RHEA-COMP:9955"/>
        <dbReference type="Rhea" id="RHEA-COMP:10186"/>
        <dbReference type="ChEBI" id="CHEBI:15377"/>
        <dbReference type="ChEBI" id="CHEBI:15378"/>
        <dbReference type="ChEBI" id="CHEBI:17790"/>
        <dbReference type="ChEBI" id="CHEBI:78846"/>
        <dbReference type="ChEBI" id="CHEBI:82735"/>
        <dbReference type="EC" id="3.1.1.85"/>
    </reaction>
</comment>
<comment type="activity regulation">
    <text>Strongly inhibited by phenylmethylsulfonyl fluoride (PMSF).</text>
</comment>
<comment type="biophysicochemical properties">
    <kinetics>
        <KM evidence="4 5 6">229 uM for DMB-S-MMP (at Ph 7.9 and at room temperature)</KM>
        <KM evidence="4 5 6">0.29 mM for pNP-acetate</KM>
        <KM evidence="4 5 6">0.35 mM for pNP-propionate</KM>
        <KM evidence="4 5 6">0.33 mM for pNP-butyrate</KM>
        <KM evidence="4 5 6">0.25 mM for pNP-caproate</KM>
        <KM evidence="4 5 6">0.6 mM for pNP-laurate</KM>
        <text>The highest catalytic efficiency was observed with pNP-acetate, then with pNP-propionate, pNP-butyrate and pNP-caproate.</text>
    </kinetics>
    <phDependence>
        <text evidence="4 5 6">Optimum pH is 8.0-8.5. The activity is more than 90% in the pH range from 7 to 9.</text>
    </phDependence>
    <temperatureDependence>
        <text evidence="4 5 6">Optimum temperature is between 20 and 30 degrees Celsius.</text>
    </temperatureDependence>
</comment>
<comment type="pathway">
    <text>Cofactor biosynthesis; biotin biosynthesis.</text>
</comment>
<comment type="subunit">
    <text evidence="3">Monomer.</text>
</comment>
<comment type="interaction">
    <interactant intactId="EBI-1132260">
        <id>P13001</id>
    </interactant>
    <interactant intactId="EBI-542566">
        <id>P0A6A8</id>
        <label>acpP</label>
    </interactant>
    <organismsDiffer>false</organismsDiffer>
    <experiments>3</experiments>
</comment>
<comment type="subcellular location">
    <subcellularLocation>
        <location evidence="1">Cytoplasm</location>
    </subcellularLocation>
</comment>
<comment type="mass spectrometry"/>
<comment type="disruption phenotype">
    <text evidence="5">Cells display no detectable hydrolysis of the thioester and no trace of DMB-S-MPA.</text>
</comment>
<comment type="similarity">
    <text evidence="8">Belongs to the AB hydrolase superfamily. Carboxylesterase BioH family.</text>
</comment>
<organism>
    <name type="scientific">Escherichia coli (strain K12)</name>
    <dbReference type="NCBI Taxonomy" id="83333"/>
    <lineage>
        <taxon>Bacteria</taxon>
        <taxon>Pseudomonadati</taxon>
        <taxon>Pseudomonadota</taxon>
        <taxon>Gammaproteobacteria</taxon>
        <taxon>Enterobacterales</taxon>
        <taxon>Enterobacteriaceae</taxon>
        <taxon>Escherichia</taxon>
    </lineage>
</organism>
<keyword id="KW-0002">3D-structure</keyword>
<keyword id="KW-0093">Biotin biosynthesis</keyword>
<keyword id="KW-0963">Cytoplasm</keyword>
<keyword id="KW-0378">Hydrolase</keyword>
<keyword id="KW-1185">Reference proteome</keyword>
<keyword id="KW-0719">Serine esterase</keyword>
<evidence type="ECO:0000250" key="1"/>
<evidence type="ECO:0000255" key="2"/>
<evidence type="ECO:0000269" key="3">
    <source>
    </source>
</evidence>
<evidence type="ECO:0000269" key="4">
    <source>
    </source>
</evidence>
<evidence type="ECO:0000269" key="5">
    <source>
    </source>
</evidence>
<evidence type="ECO:0000269" key="6">
    <source>
    </source>
</evidence>
<evidence type="ECO:0000269" key="7">
    <source>
    </source>
</evidence>
<evidence type="ECO:0000305" key="8"/>
<evidence type="ECO:0007829" key="9">
    <source>
        <dbReference type="PDB" id="1M33"/>
    </source>
</evidence>